<name>CUTI3_ASPCL</name>
<accession>A1C9G0</accession>
<proteinExistence type="inferred from homology"/>
<protein>
    <recommendedName>
        <fullName>Probable cutinase 3</fullName>
        <ecNumber evidence="5">3.1.1.74</ecNumber>
    </recommendedName>
    <alternativeName>
        <fullName>Cutin hydrolase 3</fullName>
    </alternativeName>
</protein>
<reference key="1">
    <citation type="journal article" date="2008" name="PLoS Genet.">
        <title>Genomic islands in the pathogenic filamentous fungus Aspergillus fumigatus.</title>
        <authorList>
            <person name="Fedorova N.D."/>
            <person name="Khaldi N."/>
            <person name="Joardar V.S."/>
            <person name="Maiti R."/>
            <person name="Amedeo P."/>
            <person name="Anderson M.J."/>
            <person name="Crabtree J."/>
            <person name="Silva J.C."/>
            <person name="Badger J.H."/>
            <person name="Albarraq A."/>
            <person name="Angiuoli S."/>
            <person name="Bussey H."/>
            <person name="Bowyer P."/>
            <person name="Cotty P.J."/>
            <person name="Dyer P.S."/>
            <person name="Egan A."/>
            <person name="Galens K."/>
            <person name="Fraser-Liggett C.M."/>
            <person name="Haas B.J."/>
            <person name="Inman J.M."/>
            <person name="Kent R."/>
            <person name="Lemieux S."/>
            <person name="Malavazi I."/>
            <person name="Orvis J."/>
            <person name="Roemer T."/>
            <person name="Ronning C.M."/>
            <person name="Sundaram J.P."/>
            <person name="Sutton G."/>
            <person name="Turner G."/>
            <person name="Venter J.C."/>
            <person name="White O.R."/>
            <person name="Whitty B.R."/>
            <person name="Youngman P."/>
            <person name="Wolfe K.H."/>
            <person name="Goldman G.H."/>
            <person name="Wortman J.R."/>
            <person name="Jiang B."/>
            <person name="Denning D.W."/>
            <person name="Nierman W.C."/>
        </authorList>
    </citation>
    <scope>NUCLEOTIDE SEQUENCE [LARGE SCALE GENOMIC DNA]</scope>
    <source>
        <strain>ATCC 1007 / CBS 513.65 / DSM 816 / NCTC 3887 / NRRL 1 / QM 1276 / 107</strain>
    </source>
</reference>
<comment type="function">
    <text evidence="1">Catalyzes the hydrolysis of complex carboxylic polyesters found in the cell wall of plants (By similarity). Degrades cutin, a macromolecule that forms the structure of the plant cuticle (By similarity).</text>
</comment>
<comment type="catalytic activity">
    <reaction evidence="5">
        <text>cutin + H2O = cutin monomers.</text>
        <dbReference type="EC" id="3.1.1.74"/>
    </reaction>
</comment>
<comment type="subcellular location">
    <subcellularLocation>
        <location evidence="2">Secreted</location>
    </subcellularLocation>
</comment>
<comment type="similarity">
    <text evidence="6">Belongs to the cutinase family.</text>
</comment>
<feature type="signal peptide" evidence="4">
    <location>
        <begin position="1"/>
        <end position="17"/>
    </location>
</feature>
<feature type="chain" id="PRO_0000395246" description="Probable cutinase 3">
    <location>
        <begin position="18"/>
        <end position="215"/>
    </location>
</feature>
<feature type="active site" description="Nucleophile" evidence="5">
    <location>
        <position position="129"/>
    </location>
</feature>
<feature type="active site" evidence="5">
    <location>
        <position position="184"/>
    </location>
</feature>
<feature type="active site" description="Proton donor/acceptor" evidence="5">
    <location>
        <position position="197"/>
    </location>
</feature>
<feature type="site" description="Transition state stabilizer" evidence="1">
    <location>
        <position position="50"/>
    </location>
</feature>
<feature type="site" description="Transition state stabilizer" evidence="1">
    <location>
        <position position="130"/>
    </location>
</feature>
<feature type="disulfide bond" evidence="3">
    <location>
        <begin position="39"/>
        <end position="118"/>
    </location>
</feature>
<feature type="disulfide bond" evidence="3">
    <location>
        <begin position="65"/>
        <end position="79"/>
    </location>
</feature>
<feature type="disulfide bond" evidence="3">
    <location>
        <begin position="180"/>
        <end position="187"/>
    </location>
</feature>
<sequence length="215" mass="22860">MHFRALLVSALATLAMAAPAPTLEARQSLSSNELENGPCRDVTFIFARGSTEQGNMGFIVGPPTCTALKLKLGSDKVACQGVGGAYTANLLPNFLSQNTDPKSIAAATDMFQLARTKCPNTKIVTGGYSQGSAVIDNSVKALDDDLKSRVKAAVLFGFTRNVVDRGQIPNYPKDQVKVYCAVGDMVCYNTLIITAAHLTYGIYANDAANFLVSKL</sequence>
<gene>
    <name type="ORF">ACLA_055320</name>
</gene>
<organism>
    <name type="scientific">Aspergillus clavatus (strain ATCC 1007 / CBS 513.65 / DSM 816 / NCTC 3887 / NRRL 1 / QM 1276 / 107)</name>
    <dbReference type="NCBI Taxonomy" id="344612"/>
    <lineage>
        <taxon>Eukaryota</taxon>
        <taxon>Fungi</taxon>
        <taxon>Dikarya</taxon>
        <taxon>Ascomycota</taxon>
        <taxon>Pezizomycotina</taxon>
        <taxon>Eurotiomycetes</taxon>
        <taxon>Eurotiomycetidae</taxon>
        <taxon>Eurotiales</taxon>
        <taxon>Aspergillaceae</taxon>
        <taxon>Aspergillus</taxon>
        <taxon>Aspergillus subgen. Fumigati</taxon>
    </lineage>
</organism>
<evidence type="ECO:0000250" key="1">
    <source>
        <dbReference type="UniProtKB" id="P00590"/>
    </source>
</evidence>
<evidence type="ECO:0000250" key="2">
    <source>
        <dbReference type="UniProtKB" id="P11373"/>
    </source>
</evidence>
<evidence type="ECO:0000250" key="3">
    <source>
        <dbReference type="UniProtKB" id="P52956"/>
    </source>
</evidence>
<evidence type="ECO:0000255" key="4"/>
<evidence type="ECO:0000255" key="5">
    <source>
        <dbReference type="PROSITE-ProRule" id="PRU10108"/>
    </source>
</evidence>
<evidence type="ECO:0000305" key="6"/>
<keyword id="KW-1015">Disulfide bond</keyword>
<keyword id="KW-0378">Hydrolase</keyword>
<keyword id="KW-1185">Reference proteome</keyword>
<keyword id="KW-0964">Secreted</keyword>
<keyword id="KW-0719">Serine esterase</keyword>
<keyword id="KW-0732">Signal</keyword>
<dbReference type="EC" id="3.1.1.74" evidence="5"/>
<dbReference type="EMBL" id="DS027048">
    <property type="protein sequence ID" value="EAW13484.1"/>
    <property type="molecule type" value="Genomic_DNA"/>
</dbReference>
<dbReference type="RefSeq" id="XP_001274910.1">
    <property type="nucleotide sequence ID" value="XM_001274909.1"/>
</dbReference>
<dbReference type="SMR" id="A1C9G0"/>
<dbReference type="ESTHER" id="aspcl-cuti3">
    <property type="family name" value="Cutinase"/>
</dbReference>
<dbReference type="EnsemblFungi" id="EAW13484">
    <property type="protein sequence ID" value="EAW13484"/>
    <property type="gene ID" value="ACLA_055320"/>
</dbReference>
<dbReference type="GeneID" id="4707132"/>
<dbReference type="KEGG" id="act:ACLA_055320"/>
<dbReference type="VEuPathDB" id="FungiDB:ACLA_055320"/>
<dbReference type="eggNOG" id="ENOG502SI38">
    <property type="taxonomic scope" value="Eukaryota"/>
</dbReference>
<dbReference type="HOGENOM" id="CLU_040058_2_0_1"/>
<dbReference type="OMA" id="FFGFTRN"/>
<dbReference type="OrthoDB" id="3225429at2759"/>
<dbReference type="Proteomes" id="UP000006701">
    <property type="component" value="Unassembled WGS sequence"/>
</dbReference>
<dbReference type="GO" id="GO:0005576">
    <property type="term" value="C:extracellular region"/>
    <property type="evidence" value="ECO:0007669"/>
    <property type="project" value="UniProtKB-SubCell"/>
</dbReference>
<dbReference type="GO" id="GO:0050525">
    <property type="term" value="F:cutinase activity"/>
    <property type="evidence" value="ECO:0000250"/>
    <property type="project" value="UniProtKB"/>
</dbReference>
<dbReference type="GO" id="GO:0016052">
    <property type="term" value="P:carbohydrate catabolic process"/>
    <property type="evidence" value="ECO:0007669"/>
    <property type="project" value="TreeGrafter"/>
</dbReference>
<dbReference type="FunFam" id="3.40.50.1820:FF:000235">
    <property type="entry name" value="Cutinase 1"/>
    <property type="match status" value="1"/>
</dbReference>
<dbReference type="Gene3D" id="3.40.50.1820">
    <property type="entry name" value="alpha/beta hydrolase"/>
    <property type="match status" value="1"/>
</dbReference>
<dbReference type="InterPro" id="IPR029058">
    <property type="entry name" value="AB_hydrolase_fold"/>
</dbReference>
<dbReference type="InterPro" id="IPR000675">
    <property type="entry name" value="Cutinase/axe"/>
</dbReference>
<dbReference type="InterPro" id="IPR043580">
    <property type="entry name" value="CUTINASE_1"/>
</dbReference>
<dbReference type="InterPro" id="IPR011150">
    <property type="entry name" value="Cutinase_monf"/>
</dbReference>
<dbReference type="PANTHER" id="PTHR48250:SF3">
    <property type="entry name" value="CUTINASE 1-RELATED"/>
    <property type="match status" value="1"/>
</dbReference>
<dbReference type="PANTHER" id="PTHR48250">
    <property type="entry name" value="CUTINASE 2-RELATED"/>
    <property type="match status" value="1"/>
</dbReference>
<dbReference type="Pfam" id="PF01083">
    <property type="entry name" value="Cutinase"/>
    <property type="match status" value="1"/>
</dbReference>
<dbReference type="PRINTS" id="PR00129">
    <property type="entry name" value="CUTINASE"/>
</dbReference>
<dbReference type="SMART" id="SM01110">
    <property type="entry name" value="Cutinase"/>
    <property type="match status" value="1"/>
</dbReference>
<dbReference type="SUPFAM" id="SSF53474">
    <property type="entry name" value="alpha/beta-Hydrolases"/>
    <property type="match status" value="1"/>
</dbReference>
<dbReference type="PROSITE" id="PS00155">
    <property type="entry name" value="CUTINASE_1"/>
    <property type="match status" value="1"/>
</dbReference>